<proteinExistence type="inferred from homology"/>
<feature type="chain" id="PRO_0000359736" description="CTL-like protein DDB_G0274487">
    <location>
        <begin position="1"/>
        <end position="555"/>
    </location>
</feature>
<feature type="transmembrane region" description="Helical" evidence="2">
    <location>
        <begin position="138"/>
        <end position="158"/>
    </location>
</feature>
<feature type="transmembrane region" description="Helical" evidence="2">
    <location>
        <begin position="182"/>
        <end position="202"/>
    </location>
</feature>
<feature type="transmembrane region" description="Helical" evidence="2">
    <location>
        <begin position="210"/>
        <end position="230"/>
    </location>
</feature>
<feature type="transmembrane region" description="Helical" evidence="2">
    <location>
        <begin position="231"/>
        <end position="251"/>
    </location>
</feature>
<feature type="transmembrane region" description="Helical" evidence="2">
    <location>
        <begin position="284"/>
        <end position="304"/>
    </location>
</feature>
<feature type="transmembrane region" description="Helical" evidence="2">
    <location>
        <begin position="313"/>
        <end position="333"/>
    </location>
</feature>
<feature type="transmembrane region" description="Helical" evidence="2">
    <location>
        <begin position="340"/>
        <end position="360"/>
    </location>
</feature>
<feature type="transmembrane region" description="Helical" evidence="2">
    <location>
        <begin position="372"/>
        <end position="392"/>
    </location>
</feature>
<feature type="transmembrane region" description="Helical" evidence="2">
    <location>
        <begin position="405"/>
        <end position="425"/>
    </location>
</feature>
<feature type="transmembrane region" description="Helical" evidence="2">
    <location>
        <begin position="472"/>
        <end position="492"/>
    </location>
</feature>
<feature type="transmembrane region" description="Helical" evidence="2">
    <location>
        <begin position="493"/>
        <end position="513"/>
    </location>
</feature>
<feature type="region of interest" description="Disordered" evidence="3">
    <location>
        <begin position="1"/>
        <end position="101"/>
    </location>
</feature>
<feature type="compositionally biased region" description="Polar residues" evidence="3">
    <location>
        <begin position="1"/>
        <end position="17"/>
    </location>
</feature>
<feature type="compositionally biased region" description="Low complexity" evidence="3">
    <location>
        <begin position="19"/>
        <end position="63"/>
    </location>
</feature>
<feature type="compositionally biased region" description="Pro residues" evidence="3">
    <location>
        <begin position="79"/>
        <end position="90"/>
    </location>
</feature>
<feature type="glycosylation site" description="N-linked (GlcNAc...) asparagine" evidence="2">
    <location>
        <position position="116"/>
    </location>
</feature>
<feature type="glycosylation site" description="N-linked (GlcNAc...) asparagine" evidence="2">
    <location>
        <position position="174"/>
    </location>
</feature>
<protein>
    <recommendedName>
        <fullName>CTL-like protein DDB_G0274487</fullName>
    </recommendedName>
</protein>
<keyword id="KW-0325">Glycoprotein</keyword>
<keyword id="KW-0472">Membrane</keyword>
<keyword id="KW-1185">Reference proteome</keyword>
<keyword id="KW-0812">Transmembrane</keyword>
<keyword id="KW-1133">Transmembrane helix</keyword>
<evidence type="ECO:0000250" key="1"/>
<evidence type="ECO:0000255" key="2"/>
<evidence type="ECO:0000256" key="3">
    <source>
        <dbReference type="SAM" id="MobiDB-lite"/>
    </source>
</evidence>
<evidence type="ECO:0000305" key="4"/>
<dbReference type="EMBL" id="AAFI02000012">
    <property type="protein sequence ID" value="EAL70136.1"/>
    <property type="molecule type" value="Genomic_DNA"/>
</dbReference>
<dbReference type="RefSeq" id="XP_644127.1">
    <property type="nucleotide sequence ID" value="XM_639035.1"/>
</dbReference>
<dbReference type="SMR" id="Q869R1"/>
<dbReference type="FunCoup" id="Q869R1">
    <property type="interactions" value="48"/>
</dbReference>
<dbReference type="GlyGen" id="Q869R1">
    <property type="glycosylation" value="2 sites"/>
</dbReference>
<dbReference type="PaxDb" id="44689-DDB0167700"/>
<dbReference type="EnsemblProtists" id="EAL70136">
    <property type="protein sequence ID" value="EAL70136"/>
    <property type="gene ID" value="DDB_G0274487"/>
</dbReference>
<dbReference type="GeneID" id="8619557"/>
<dbReference type="KEGG" id="ddi:DDB_G0274487"/>
<dbReference type="dictyBase" id="DDB_G0274487"/>
<dbReference type="VEuPathDB" id="AmoebaDB:DDB_G0274487"/>
<dbReference type="eggNOG" id="KOG1362">
    <property type="taxonomic scope" value="Eukaryota"/>
</dbReference>
<dbReference type="HOGENOM" id="CLU_539099_0_0_1"/>
<dbReference type="InParanoid" id="Q869R1"/>
<dbReference type="OMA" id="CRIAMAW"/>
<dbReference type="PhylomeDB" id="Q869R1"/>
<dbReference type="PRO" id="PR:Q869R1"/>
<dbReference type="Proteomes" id="UP000002195">
    <property type="component" value="Chromosome 2"/>
</dbReference>
<dbReference type="GO" id="GO:0016020">
    <property type="term" value="C:membrane"/>
    <property type="evidence" value="ECO:0000318"/>
    <property type="project" value="GO_Central"/>
</dbReference>
<dbReference type="GO" id="GO:0022857">
    <property type="term" value="F:transmembrane transporter activity"/>
    <property type="evidence" value="ECO:0000318"/>
    <property type="project" value="GO_Central"/>
</dbReference>
<dbReference type="GO" id="GO:0055085">
    <property type="term" value="P:transmembrane transport"/>
    <property type="evidence" value="ECO:0000318"/>
    <property type="project" value="GO_Central"/>
</dbReference>
<dbReference type="InterPro" id="IPR007603">
    <property type="entry name" value="Choline_transptr-like"/>
</dbReference>
<dbReference type="PANTHER" id="PTHR12385">
    <property type="entry name" value="CHOLINE TRANSPORTER-LIKE (SLC FAMILY 44)"/>
    <property type="match status" value="1"/>
</dbReference>
<dbReference type="PANTHER" id="PTHR12385:SF4">
    <property type="entry name" value="PROTEIN PNS1"/>
    <property type="match status" value="1"/>
</dbReference>
<dbReference type="Pfam" id="PF04515">
    <property type="entry name" value="Choline_transpo"/>
    <property type="match status" value="1"/>
</dbReference>
<organism>
    <name type="scientific">Dictyostelium discoideum</name>
    <name type="common">Social amoeba</name>
    <dbReference type="NCBI Taxonomy" id="44689"/>
    <lineage>
        <taxon>Eukaryota</taxon>
        <taxon>Amoebozoa</taxon>
        <taxon>Evosea</taxon>
        <taxon>Eumycetozoa</taxon>
        <taxon>Dictyostelia</taxon>
        <taxon>Dictyosteliales</taxon>
        <taxon>Dictyosteliaceae</taxon>
        <taxon>Dictyostelium</taxon>
    </lineage>
</organism>
<name>CTLHB_DICDI</name>
<gene>
    <name type="ORF">DDB_G0274487</name>
</gene>
<reference key="1">
    <citation type="journal article" date="2002" name="Nature">
        <title>Sequence and analysis of chromosome 2 of Dictyostelium discoideum.</title>
        <authorList>
            <person name="Gloeckner G."/>
            <person name="Eichinger L."/>
            <person name="Szafranski K."/>
            <person name="Pachebat J.A."/>
            <person name="Bankier A.T."/>
            <person name="Dear P.H."/>
            <person name="Lehmann R."/>
            <person name="Baumgart C."/>
            <person name="Parra G."/>
            <person name="Abril J.F."/>
            <person name="Guigo R."/>
            <person name="Kumpf K."/>
            <person name="Tunggal B."/>
            <person name="Cox E.C."/>
            <person name="Quail M.A."/>
            <person name="Platzer M."/>
            <person name="Rosenthal A."/>
            <person name="Noegel A.A."/>
        </authorList>
    </citation>
    <scope>NUCLEOTIDE SEQUENCE [LARGE SCALE GENOMIC DNA]</scope>
    <source>
        <strain>AX4</strain>
    </source>
</reference>
<reference key="2">
    <citation type="journal article" date="2005" name="Nature">
        <title>The genome of the social amoeba Dictyostelium discoideum.</title>
        <authorList>
            <person name="Eichinger L."/>
            <person name="Pachebat J.A."/>
            <person name="Gloeckner G."/>
            <person name="Rajandream M.A."/>
            <person name="Sucgang R."/>
            <person name="Berriman M."/>
            <person name="Song J."/>
            <person name="Olsen R."/>
            <person name="Szafranski K."/>
            <person name="Xu Q."/>
            <person name="Tunggal B."/>
            <person name="Kummerfeld S."/>
            <person name="Madera M."/>
            <person name="Konfortov B.A."/>
            <person name="Rivero F."/>
            <person name="Bankier A.T."/>
            <person name="Lehmann R."/>
            <person name="Hamlin N."/>
            <person name="Davies R."/>
            <person name="Gaudet P."/>
            <person name="Fey P."/>
            <person name="Pilcher K."/>
            <person name="Chen G."/>
            <person name="Saunders D."/>
            <person name="Sodergren E.J."/>
            <person name="Davis P."/>
            <person name="Kerhornou A."/>
            <person name="Nie X."/>
            <person name="Hall N."/>
            <person name="Anjard C."/>
            <person name="Hemphill L."/>
            <person name="Bason N."/>
            <person name="Farbrother P."/>
            <person name="Desany B."/>
            <person name="Just E."/>
            <person name="Morio T."/>
            <person name="Rost R."/>
            <person name="Churcher C.M."/>
            <person name="Cooper J."/>
            <person name="Haydock S."/>
            <person name="van Driessche N."/>
            <person name="Cronin A."/>
            <person name="Goodhead I."/>
            <person name="Muzny D.M."/>
            <person name="Mourier T."/>
            <person name="Pain A."/>
            <person name="Lu M."/>
            <person name="Harper D."/>
            <person name="Lindsay R."/>
            <person name="Hauser H."/>
            <person name="James K.D."/>
            <person name="Quiles M."/>
            <person name="Madan Babu M."/>
            <person name="Saito T."/>
            <person name="Buchrieser C."/>
            <person name="Wardroper A."/>
            <person name="Felder M."/>
            <person name="Thangavelu M."/>
            <person name="Johnson D."/>
            <person name="Knights A."/>
            <person name="Loulseged H."/>
            <person name="Mungall K.L."/>
            <person name="Oliver K."/>
            <person name="Price C."/>
            <person name="Quail M.A."/>
            <person name="Urushihara H."/>
            <person name="Hernandez J."/>
            <person name="Rabbinowitsch E."/>
            <person name="Steffen D."/>
            <person name="Sanders M."/>
            <person name="Ma J."/>
            <person name="Kohara Y."/>
            <person name="Sharp S."/>
            <person name="Simmonds M.N."/>
            <person name="Spiegler S."/>
            <person name="Tivey A."/>
            <person name="Sugano S."/>
            <person name="White B."/>
            <person name="Walker D."/>
            <person name="Woodward J.R."/>
            <person name="Winckler T."/>
            <person name="Tanaka Y."/>
            <person name="Shaulsky G."/>
            <person name="Schleicher M."/>
            <person name="Weinstock G.M."/>
            <person name="Rosenthal A."/>
            <person name="Cox E.C."/>
            <person name="Chisholm R.L."/>
            <person name="Gibbs R.A."/>
            <person name="Loomis W.F."/>
            <person name="Platzer M."/>
            <person name="Kay R.R."/>
            <person name="Williams J.G."/>
            <person name="Dear P.H."/>
            <person name="Noegel A.A."/>
            <person name="Barrell B.G."/>
            <person name="Kuspa A."/>
        </authorList>
    </citation>
    <scope>NUCLEOTIDE SEQUENCE [LARGE SCALE GENOMIC DNA]</scope>
    <source>
        <strain>AX4</strain>
    </source>
</reference>
<accession>Q869R1</accession>
<accession>Q556E5</accession>
<comment type="subcellular location">
    <subcellularLocation>
        <location evidence="1">Membrane</location>
        <topology evidence="1">Multi-pass membrane protein</topology>
    </subcellularLocation>
</comment>
<comment type="similarity">
    <text evidence="4">Belongs to the CTL (choline transporter-like) family.</text>
</comment>
<sequence>MGIEDNSQQPNTGSPYGQSPPSQYNPYGQQPPQQQQYNPYGEQQQQPQQQQQYGYQPQFQPTYQQPPPQPQYYSQAQMPFPPQQQQPPPITNLNKANDRESLIGGVGGGGIPPNNNQTMVGSYNEGETKFAPPKYQDIWFSILFGLNFGLLIVVSASAFAKTPYTYYDSNYYDNTSGGSFGFLFAILPFTIVFSLLYIWAWLKLAANHAESLIKYSFFGAMGLMIGYCVFFFVWGAIYLGIIFAIMAFFIILFYISCRSRIPFTATLLSNAVAIIKEYPSVIRAGYVSIFINFVWFIVWGSAFARVNMVYTGAIQTCINIYLVFTLYWVFHVIKNTLHTTVSGLLATWYFCSGPNGVGMPHNPTLGSARRALTTSFGSICFGSLIISLIETLRYLSQMMINNRNVVVKIIGYIFNCILSMLSSIVQFFNTYAFTHVAIYGKSFCDSAKSTFTMFENRLGSTIINDNFVGTTIAIGGLVASLLLSILGALISIPFDMSVYGGALALFIGYLVIITNLEVVYSSTISLFVCYVMEPEVLAHTKPQLYQLYSSTYHLR</sequence>